<comment type="subcellular location">
    <subcellularLocation>
        <location evidence="1">Cell membrane</location>
        <topology evidence="1">Multi-pass membrane protein</topology>
    </subcellularLocation>
</comment>
<comment type="similarity">
    <text evidence="1">Belongs to the UPF0756 family.</text>
</comment>
<evidence type="ECO:0000255" key="1">
    <source>
        <dbReference type="HAMAP-Rule" id="MF_01874"/>
    </source>
</evidence>
<proteinExistence type="inferred from homology"/>
<keyword id="KW-1003">Cell membrane</keyword>
<keyword id="KW-0472">Membrane</keyword>
<keyword id="KW-0812">Transmembrane</keyword>
<keyword id="KW-1133">Transmembrane helix</keyword>
<reference key="1">
    <citation type="journal article" date="2006" name="J. Bacteriol.">
        <title>Complete genome sequence of Yersinia pestis strains Antiqua and Nepal516: evidence of gene reduction in an emerging pathogen.</title>
        <authorList>
            <person name="Chain P.S.G."/>
            <person name="Hu P."/>
            <person name="Malfatti S.A."/>
            <person name="Radnedge L."/>
            <person name="Larimer F."/>
            <person name="Vergez L.M."/>
            <person name="Worsham P."/>
            <person name="Chu M.C."/>
            <person name="Andersen G.L."/>
        </authorList>
    </citation>
    <scope>NUCLEOTIDE SEQUENCE [LARGE SCALE GENOMIC DNA]</scope>
    <source>
        <strain>Antiqua</strain>
    </source>
</reference>
<accession>Q1C5Q9</accession>
<gene>
    <name type="ordered locus">YPA_2248</name>
</gene>
<name>Y2248_YERPA</name>
<organism>
    <name type="scientific">Yersinia pestis bv. Antiqua (strain Antiqua)</name>
    <dbReference type="NCBI Taxonomy" id="360102"/>
    <lineage>
        <taxon>Bacteria</taxon>
        <taxon>Pseudomonadati</taxon>
        <taxon>Pseudomonadota</taxon>
        <taxon>Gammaproteobacteria</taxon>
        <taxon>Enterobacterales</taxon>
        <taxon>Yersiniaceae</taxon>
        <taxon>Yersinia</taxon>
    </lineage>
</organism>
<sequence>MAALDPTLLILLALAALGILSHNMTVTLAILILIAIRITPLNSFFPWVEKYGLTIGVLILTIGVMAPIASGKISASEVLHSFVQWKSILAIVVGVAVSWLGGRGVSLMTHQPSVVAGLLVGTVLGVALFKGVPVGPLIAAGLLSLVIGKS</sequence>
<protein>
    <recommendedName>
        <fullName evidence="1">UPF0756 membrane protein YPA_2248</fullName>
    </recommendedName>
</protein>
<feature type="chain" id="PRO_5000116098" description="UPF0756 membrane protein YPA_2248">
    <location>
        <begin position="1"/>
        <end position="150"/>
    </location>
</feature>
<feature type="transmembrane region" description="Helical" evidence="1">
    <location>
        <begin position="16"/>
        <end position="36"/>
    </location>
</feature>
<feature type="transmembrane region" description="Helical" evidence="1">
    <location>
        <begin position="51"/>
        <end position="71"/>
    </location>
</feature>
<feature type="transmembrane region" description="Helical" evidence="1">
    <location>
        <begin position="88"/>
        <end position="108"/>
    </location>
</feature>
<feature type="transmembrane region" description="Helical" evidence="1">
    <location>
        <begin position="114"/>
        <end position="134"/>
    </location>
</feature>
<dbReference type="EMBL" id="CP000308">
    <property type="protein sequence ID" value="ABG14213.1"/>
    <property type="molecule type" value="Genomic_DNA"/>
</dbReference>
<dbReference type="RefSeq" id="WP_002208553.1">
    <property type="nucleotide sequence ID" value="NZ_CP009906.1"/>
</dbReference>
<dbReference type="KEGG" id="ypa:YPA_2248"/>
<dbReference type="Proteomes" id="UP000001971">
    <property type="component" value="Chromosome"/>
</dbReference>
<dbReference type="GO" id="GO:0005886">
    <property type="term" value="C:plasma membrane"/>
    <property type="evidence" value="ECO:0007669"/>
    <property type="project" value="UniProtKB-SubCell"/>
</dbReference>
<dbReference type="HAMAP" id="MF_01874">
    <property type="entry name" value="UPF0756"/>
    <property type="match status" value="1"/>
</dbReference>
<dbReference type="InterPro" id="IPR007382">
    <property type="entry name" value="UPF0756_TM"/>
</dbReference>
<dbReference type="PANTHER" id="PTHR38452">
    <property type="entry name" value="UPF0756 MEMBRANE PROTEIN YEAL"/>
    <property type="match status" value="1"/>
</dbReference>
<dbReference type="PANTHER" id="PTHR38452:SF1">
    <property type="entry name" value="UPF0756 MEMBRANE PROTEIN YEAL"/>
    <property type="match status" value="1"/>
</dbReference>
<dbReference type="Pfam" id="PF04284">
    <property type="entry name" value="DUF441"/>
    <property type="match status" value="1"/>
</dbReference>